<dbReference type="EC" id="2.7.7.2" evidence="1"/>
<dbReference type="EMBL" id="CP001719">
    <property type="protein sequence ID" value="ADC47568.1"/>
    <property type="molecule type" value="Genomic_DNA"/>
</dbReference>
<dbReference type="RefSeq" id="WP_012956516.1">
    <property type="nucleotide sequence ID" value="NC_013790.1"/>
</dbReference>
<dbReference type="SMR" id="D3DZ18"/>
<dbReference type="STRING" id="634498.mru_1718"/>
<dbReference type="GeneID" id="8771382"/>
<dbReference type="KEGG" id="mru:mru_1718"/>
<dbReference type="PATRIC" id="fig|634498.28.peg.1719"/>
<dbReference type="eggNOG" id="arCOG01222">
    <property type="taxonomic scope" value="Archaea"/>
</dbReference>
<dbReference type="HOGENOM" id="CLU_034585_2_1_2"/>
<dbReference type="OrthoDB" id="1912at2157"/>
<dbReference type="UniPathway" id="UPA00277">
    <property type="reaction ID" value="UER00407"/>
</dbReference>
<dbReference type="Proteomes" id="UP000008680">
    <property type="component" value="Chromosome"/>
</dbReference>
<dbReference type="GO" id="GO:0005524">
    <property type="term" value="F:ATP binding"/>
    <property type="evidence" value="ECO:0007669"/>
    <property type="project" value="UniProtKB-UniRule"/>
</dbReference>
<dbReference type="GO" id="GO:0003919">
    <property type="term" value="F:FMN adenylyltransferase activity"/>
    <property type="evidence" value="ECO:0007669"/>
    <property type="project" value="UniProtKB-UniRule"/>
</dbReference>
<dbReference type="GO" id="GO:0006747">
    <property type="term" value="P:FAD biosynthetic process"/>
    <property type="evidence" value="ECO:0007669"/>
    <property type="project" value="UniProtKB-UniRule"/>
</dbReference>
<dbReference type="GO" id="GO:0046444">
    <property type="term" value="P:FMN metabolic process"/>
    <property type="evidence" value="ECO:0007669"/>
    <property type="project" value="UniProtKB-UniRule"/>
</dbReference>
<dbReference type="Gene3D" id="3.40.50.620">
    <property type="entry name" value="HUPs"/>
    <property type="match status" value="1"/>
</dbReference>
<dbReference type="HAMAP" id="MF_02115">
    <property type="entry name" value="FAD_synth_arch"/>
    <property type="match status" value="1"/>
</dbReference>
<dbReference type="InterPro" id="IPR050385">
    <property type="entry name" value="Archaeal_FAD_synthase"/>
</dbReference>
<dbReference type="InterPro" id="IPR004821">
    <property type="entry name" value="Cyt_trans-like"/>
</dbReference>
<dbReference type="InterPro" id="IPR024902">
    <property type="entry name" value="FAD_synth_RibL"/>
</dbReference>
<dbReference type="InterPro" id="IPR014729">
    <property type="entry name" value="Rossmann-like_a/b/a_fold"/>
</dbReference>
<dbReference type="NCBIfam" id="TIGR00125">
    <property type="entry name" value="cyt_tran_rel"/>
    <property type="match status" value="1"/>
</dbReference>
<dbReference type="PANTHER" id="PTHR43793">
    <property type="entry name" value="FAD SYNTHASE"/>
    <property type="match status" value="1"/>
</dbReference>
<dbReference type="PANTHER" id="PTHR43793:SF1">
    <property type="entry name" value="FAD SYNTHASE"/>
    <property type="match status" value="1"/>
</dbReference>
<dbReference type="Pfam" id="PF01467">
    <property type="entry name" value="CTP_transf_like"/>
    <property type="match status" value="1"/>
</dbReference>
<dbReference type="SUPFAM" id="SSF52374">
    <property type="entry name" value="Nucleotidylyl transferase"/>
    <property type="match status" value="1"/>
</dbReference>
<organism>
    <name type="scientific">Methanobrevibacter ruminantium (strain ATCC 35063 / DSM 1093 / JCM 13430 / OCM 146 / M1)</name>
    <name type="common">Methanobacterium ruminantium</name>
    <dbReference type="NCBI Taxonomy" id="634498"/>
    <lineage>
        <taxon>Archaea</taxon>
        <taxon>Methanobacteriati</taxon>
        <taxon>Methanobacteriota</taxon>
        <taxon>Methanomada group</taxon>
        <taxon>Methanobacteria</taxon>
        <taxon>Methanobacteriales</taxon>
        <taxon>Methanobacteriaceae</taxon>
        <taxon>Methanobrevibacter</taxon>
    </lineage>
</organism>
<gene>
    <name evidence="1" type="primary">ribL</name>
    <name type="ordered locus">mru_1718</name>
</gene>
<feature type="chain" id="PRO_0000406245" description="FAD synthase">
    <location>
        <begin position="1"/>
        <end position="150"/>
    </location>
</feature>
<feature type="binding site" evidence="1">
    <location>
        <begin position="8"/>
        <end position="9"/>
    </location>
    <ligand>
        <name>ATP</name>
        <dbReference type="ChEBI" id="CHEBI:30616"/>
    </ligand>
</feature>
<feature type="binding site" evidence="1">
    <location>
        <begin position="13"/>
        <end position="16"/>
    </location>
    <ligand>
        <name>ATP</name>
        <dbReference type="ChEBI" id="CHEBI:30616"/>
    </ligand>
</feature>
<feature type="binding site" evidence="1">
    <location>
        <position position="95"/>
    </location>
    <ligand>
        <name>ATP</name>
        <dbReference type="ChEBI" id="CHEBI:30616"/>
    </ligand>
</feature>
<feature type="binding site" evidence="1">
    <location>
        <position position="122"/>
    </location>
    <ligand>
        <name>ATP</name>
        <dbReference type="ChEBI" id="CHEBI:30616"/>
    </ligand>
</feature>
<name>RIBL_METRM</name>
<evidence type="ECO:0000255" key="1">
    <source>
        <dbReference type="HAMAP-Rule" id="MF_02115"/>
    </source>
</evidence>
<protein>
    <recommendedName>
        <fullName evidence="1">FAD synthase</fullName>
        <ecNumber evidence="1">2.7.7.2</ecNumber>
    </recommendedName>
    <alternativeName>
        <fullName evidence="1">FMN adenylyltransferase</fullName>
    </alternativeName>
    <alternativeName>
        <fullName evidence="1">Flavin adenine dinucleotide synthase</fullName>
    </alternativeName>
</protein>
<proteinExistence type="inferred from homology"/>
<comment type="function">
    <text evidence="1">Catalyzes the transfer of the AMP portion of ATP to flavin mononucleotide (FMN) to produce flavin adenine dinucleotide (FAD) coenzyme.</text>
</comment>
<comment type="catalytic activity">
    <reaction evidence="1">
        <text>FMN + ATP + H(+) = FAD + diphosphate</text>
        <dbReference type="Rhea" id="RHEA:17237"/>
        <dbReference type="ChEBI" id="CHEBI:15378"/>
        <dbReference type="ChEBI" id="CHEBI:30616"/>
        <dbReference type="ChEBI" id="CHEBI:33019"/>
        <dbReference type="ChEBI" id="CHEBI:57692"/>
        <dbReference type="ChEBI" id="CHEBI:58210"/>
        <dbReference type="EC" id="2.7.7.2"/>
    </reaction>
</comment>
<comment type="cofactor">
    <cofactor evidence="1">
        <name>a divalent metal cation</name>
        <dbReference type="ChEBI" id="CHEBI:60240"/>
    </cofactor>
</comment>
<comment type="pathway">
    <text evidence="1">Cofactor biosynthesis; FAD biosynthesis; FAD from FMN: step 1/1.</text>
</comment>
<comment type="subunit">
    <text evidence="1">Homodimer.</text>
</comment>
<comment type="similarity">
    <text evidence="1">Belongs to the archaeal FAD synthase family.</text>
</comment>
<reference key="1">
    <citation type="journal article" date="2010" name="PLoS ONE">
        <title>The genome sequence of the rumen methanogen Methanobrevibacter ruminantium reveals new possibilities for controlling ruminant methane emissions.</title>
        <authorList>
            <person name="Leahy S.C."/>
            <person name="Kelly W.J."/>
            <person name="Altermann E."/>
            <person name="Ronimus R.S."/>
            <person name="Yeoman C.J."/>
            <person name="Pacheco D.M."/>
            <person name="Li D."/>
            <person name="Kong Z."/>
            <person name="McTavish S."/>
            <person name="Sang C."/>
            <person name="Lambie S.C."/>
            <person name="Janssen P.H."/>
            <person name="Dey D."/>
            <person name="Attwood G.T."/>
        </authorList>
    </citation>
    <scope>NUCLEOTIDE SEQUENCE [LARGE SCALE GENOMIC DNA]</scope>
    <source>
        <strain>ATCC 35063 / DSM 1093 / JCM 13430 / OCM 146 / M1</strain>
    </source>
</reference>
<sequence length="150" mass="16979">MKVMATGAFDILHPGHGLYLEKAKELGGEDAVLAVVIARDSTVKKKKRIPVIDENQRLEMIKYLKPVDEAYIGHDGDMFEIVEEIKPDIIAIGFDQGHDVNKLQEELDKRGIKAKAMRVEAHRIADLDSTCKIIKKIRNSDFEEDYVNCD</sequence>
<keyword id="KW-0067">ATP-binding</keyword>
<keyword id="KW-0274">FAD</keyword>
<keyword id="KW-0285">Flavoprotein</keyword>
<keyword id="KW-0288">FMN</keyword>
<keyword id="KW-0547">Nucleotide-binding</keyword>
<keyword id="KW-0548">Nucleotidyltransferase</keyword>
<keyword id="KW-0808">Transferase</keyword>
<accession>D3DZ18</accession>